<comment type="function">
    <text evidence="1">Might be involved in transporting short diacylated glycolipids to the cell outer membrane (By similarity).</text>
</comment>
<comment type="subcellular location">
    <subcellularLocation>
        <location evidence="5">Cell membrane</location>
        <topology evidence="5">Lipid-anchor</topology>
    </subcellularLocation>
</comment>
<comment type="domain">
    <text evidence="1">Forms a U-shaped beta-half-barrel with a small hydrophobic cavity which is large enough to hold a single diacylated glycolipid molecule.</text>
</comment>
<comment type="PTM">
    <text evidence="2">Modified by Lgt on Cys-39 with an S-linked diacylglycerol with a mixture of C16, C18 and C19 fatty acids (palmitic, stearic and tuberculostearic acid respectively), signal peptide is removed by LspA, modified by Lnt with an amide-linked mixture of C16 and C19 fatty acids (By similarity).</text>
</comment>
<comment type="similarity">
    <text evidence="5">Belongs to the LppX/LprAFG lipoprotein family.</text>
</comment>
<protein>
    <recommendedName>
        <fullName>Putative diacylated glycolipid transporter LprF</fullName>
    </recommendedName>
    <alternativeName>
        <fullName>Lipoprotein LprF</fullName>
    </alternativeName>
</protein>
<keyword id="KW-1003">Cell membrane</keyword>
<keyword id="KW-0445">Lipid transport</keyword>
<keyword id="KW-0446">Lipid-binding</keyword>
<keyword id="KW-0449">Lipoprotein</keyword>
<keyword id="KW-0472">Membrane</keyword>
<keyword id="KW-0564">Palmitate</keyword>
<keyword id="KW-1185">Reference proteome</keyword>
<keyword id="KW-0732">Signal</keyword>
<keyword id="KW-0813">Transport</keyword>
<accession>P9WK46</accession>
<accession>L0T6N3</accession>
<accession>P65314</accession>
<accession>P71798</accession>
<name>LPRF_MYCTO</name>
<evidence type="ECO:0000250" key="1">
    <source>
        <dbReference type="UniProtKB" id="P65315"/>
    </source>
</evidence>
<evidence type="ECO:0000250" key="2">
    <source>
        <dbReference type="UniProtKB" id="P9WK47"/>
    </source>
</evidence>
<evidence type="ECO:0000255" key="3"/>
<evidence type="ECO:0000256" key="4">
    <source>
        <dbReference type="SAM" id="MobiDB-lite"/>
    </source>
</evidence>
<evidence type="ECO:0000305" key="5"/>
<proteinExistence type="inferred from homology"/>
<organism>
    <name type="scientific">Mycobacterium tuberculosis (strain CDC 1551 / Oshkosh)</name>
    <dbReference type="NCBI Taxonomy" id="83331"/>
    <lineage>
        <taxon>Bacteria</taxon>
        <taxon>Bacillati</taxon>
        <taxon>Actinomycetota</taxon>
        <taxon>Actinomycetes</taxon>
        <taxon>Mycobacteriales</taxon>
        <taxon>Mycobacteriaceae</taxon>
        <taxon>Mycobacterium</taxon>
        <taxon>Mycobacterium tuberculosis complex</taxon>
    </lineage>
</organism>
<sequence length="261" mass="26852">MNGLISQACGSHRPRRPSSLGAVAILIAATLFATVVAGCGKKPTTASSPSPGSPSPEAQQILQDSSKATKGLHSVHVVVTVNNLSTLPFESVDADVTNQPQGNGQAVGNAKVRMKPNTPVVATEFLVTNKTMYTKRGGDYVSVGPAEKIYDPGIILDKDRGLGAVVGQVQNPTIQGRDAIDGLATVKVSGTIDAAVIDPIVPQLGKGGGRLPITLWIVDTNASTPAPAANLVRMVIDKDQGNVDITLSNWGAPVTIPNPAG</sequence>
<dbReference type="EMBL" id="AE000516">
    <property type="protein sequence ID" value="AAK45679.1"/>
    <property type="molecule type" value="Genomic_DNA"/>
</dbReference>
<dbReference type="PIR" id="E70957">
    <property type="entry name" value="E70957"/>
</dbReference>
<dbReference type="RefSeq" id="WP_003407180.1">
    <property type="nucleotide sequence ID" value="NZ_KK341227.1"/>
</dbReference>
<dbReference type="SMR" id="P9WK46"/>
<dbReference type="KEGG" id="mtc:MT1415"/>
<dbReference type="PATRIC" id="fig|83331.31.peg.1522"/>
<dbReference type="HOGENOM" id="CLU_074100_0_0_11"/>
<dbReference type="Proteomes" id="UP000001020">
    <property type="component" value="Chromosome"/>
</dbReference>
<dbReference type="GO" id="GO:0005886">
    <property type="term" value="C:plasma membrane"/>
    <property type="evidence" value="ECO:0007669"/>
    <property type="project" value="UniProtKB-SubCell"/>
</dbReference>
<dbReference type="GO" id="GO:0008289">
    <property type="term" value="F:lipid binding"/>
    <property type="evidence" value="ECO:0007669"/>
    <property type="project" value="UniProtKB-KW"/>
</dbReference>
<dbReference type="GO" id="GO:0006869">
    <property type="term" value="P:lipid transport"/>
    <property type="evidence" value="ECO:0007669"/>
    <property type="project" value="UniProtKB-KW"/>
</dbReference>
<dbReference type="CDD" id="cd16334">
    <property type="entry name" value="LppX-like"/>
    <property type="match status" value="1"/>
</dbReference>
<dbReference type="Gene3D" id="2.50.20.20">
    <property type="match status" value="1"/>
</dbReference>
<dbReference type="InterPro" id="IPR029046">
    <property type="entry name" value="LolA/LolB/LppX"/>
</dbReference>
<dbReference type="InterPro" id="IPR009830">
    <property type="entry name" value="LppX/LprAFG"/>
</dbReference>
<dbReference type="Pfam" id="PF07161">
    <property type="entry name" value="LppX_LprAFG"/>
    <property type="match status" value="1"/>
</dbReference>
<dbReference type="SUPFAM" id="SSF89392">
    <property type="entry name" value="Prokaryotic lipoproteins and lipoprotein localization factors"/>
    <property type="match status" value="1"/>
</dbReference>
<feature type="signal peptide" evidence="3">
    <location>
        <begin position="1"/>
        <end position="38"/>
    </location>
</feature>
<feature type="chain" id="PRO_0000427717" description="Putative diacylated glycolipid transporter LprF">
    <location>
        <begin position="39"/>
        <end position="261"/>
    </location>
</feature>
<feature type="region of interest" description="Disordered" evidence="4">
    <location>
        <begin position="42"/>
        <end position="61"/>
    </location>
</feature>
<feature type="lipid moiety-binding region" description="N-palmitoyl cysteine" evidence="3">
    <location>
        <position position="39"/>
    </location>
</feature>
<feature type="lipid moiety-binding region" description="S-diacylglycerol cysteine" evidence="3">
    <location>
        <position position="39"/>
    </location>
</feature>
<gene>
    <name type="primary">lprF</name>
    <name type="ordered locus">MT1415</name>
</gene>
<reference key="1">
    <citation type="journal article" date="2002" name="J. Bacteriol.">
        <title>Whole-genome comparison of Mycobacterium tuberculosis clinical and laboratory strains.</title>
        <authorList>
            <person name="Fleischmann R.D."/>
            <person name="Alland D."/>
            <person name="Eisen J.A."/>
            <person name="Carpenter L."/>
            <person name="White O."/>
            <person name="Peterson J.D."/>
            <person name="DeBoy R.T."/>
            <person name="Dodson R.J."/>
            <person name="Gwinn M.L."/>
            <person name="Haft D.H."/>
            <person name="Hickey E.K."/>
            <person name="Kolonay J.F."/>
            <person name="Nelson W.C."/>
            <person name="Umayam L.A."/>
            <person name="Ermolaeva M.D."/>
            <person name="Salzberg S.L."/>
            <person name="Delcher A."/>
            <person name="Utterback T.R."/>
            <person name="Weidman J.F."/>
            <person name="Khouri H.M."/>
            <person name="Gill J."/>
            <person name="Mikula A."/>
            <person name="Bishai W."/>
            <person name="Jacobs W.R. Jr."/>
            <person name="Venter J.C."/>
            <person name="Fraser C.M."/>
        </authorList>
    </citation>
    <scope>NUCLEOTIDE SEQUENCE [LARGE SCALE GENOMIC DNA]</scope>
    <source>
        <strain>CDC 1551 / Oshkosh</strain>
    </source>
</reference>